<sequence>MYSEWRSLHLVIQSDQGHTSVLHSYPESVGREVANAVVRPLGQALGTSSVAGSESLLKTDKEVKWTMEVICYGLTLPLDGETVKYCVDVYTDWIMALVLPKDSIPLPIIKEPNLYVQSILKHLQNLFVPRQEQGSSQIRLCLQVLRAIQKLARESSIMARETWEVLLLFLLQINDILLAPPTVQGGIAENLAEKLIGVLFEVWLLACTRCFPTPPYWKTAKEMVANWRHHPAVVEQWSKVICALTSRLLRFTYGPSFPPFKVPDEDANLIPPEMDNECIAQTWFRFLHMLSNPVDLSNPAVISSTPKFQEQFLNVSGMPQELSQYPCLKHLPQIFFRAMRGISCLVDAFLGISRPRSDSAPPTPVNRLSMPQSAAVNTTPPHNRRHRAVTVNKATMKTSTVTTAHTSKVQHQASSTSPLSSPNQTSSEPRPLPAPRRPKVNSILNLFGSWLFDAAFVHCKLHNGINRDNSMTASFIQILLSYKSSIATQASMEFRRKGSQMSTDTMVSNPVFDASEFPDNYEAGRAEACGTLCRIFCSKKTGEEILPAYLSSVILNSPPLFCCDLKGIDVVVPYFISALETILPDRELSKFKSYVNPTELRRSSINILLSLLPLPHHFGTVRSEVVLEGKFSNDDSSSYDKPITFLSLKLRLVNILIGALQTETDPNNTQMILGAMLNIVQDSALLEAIGCQMEMGGGENNLKSHSRTNSGISSASGGSTEPTTPDSERPAQALLRDYGSTDSAAGLLIRSIHLVTQRLNSQWRQDMSISLAALELLSGLAKVKVMVDSGDRKRAISSVCSYIVYQCSRPAPLHSRDLHSMIVAAFQCLCVWLTEHPDMLDEKDCLKEVLEIVELGISGSKSKNSEQEVKYKGDKEPNPASMRVKDAAEATLTCIMQLLGAFPSPSGPASPCSLVNETTLIKYSRLPTINKHSFRYFVLDNSVILAMLEQPLGNEQNDFFPSVTVLVRGMSGRLAWAQQLCLLPRGAKANQKLFVPEPRPVPKNDVGFKYSVKHRPFPEEVDKIPFVKADLSIPDLHEIVTEELEERHEKLRSGMAQQIAYEMHLEQQSEGELQKRSFPDPVTDCKPPPPAQEFQTARLFLSHFGFLSLEALKEPANSRLPPHLIALDSTIPGFFDDIGYLDLLPCRPFDTVFIFYMKPGQKTNQEILKNVESSRNVQPHFLEFLLSLGWSVDVGKHPGWTGHVSTSWSINSCDDGEGSEPDEITSSEDVGASIFNGQKKVLYYADALTEIAFVVPSPVESLTDSLESNISDQDSDSNMDLMPGILKQPPLTLELVPNHTDSLNSSQRLSPSSRMKKLPQGRPVPPLGPETRVSVVWVERYDDIENFPLSDLMTEISTGVETTANSSTSLRSTTLEKEVPVIFIHPLNTGLFRIKIQGATGKFNMVIPLVDGMIVSRRALGFLVRQTVINICRRKRLESDSYSPPHVRRKQKITDIVNKYRNKQLEPEFYTALFQEVGLKNCSS</sequence>
<proteinExistence type="evidence at protein level"/>
<keyword id="KW-0025">Alternative splicing</keyword>
<keyword id="KW-0343">GTPase activation</keyword>
<keyword id="KW-0597">Phosphoprotein</keyword>
<keyword id="KW-1185">Reference proteome</keyword>
<dbReference type="EMBL" id="AK046067">
    <property type="protein sequence ID" value="BAC32589.1"/>
    <property type="molecule type" value="mRNA"/>
</dbReference>
<dbReference type="EMBL" id="AK047718">
    <property type="protein sequence ID" value="BAC33137.1"/>
    <property type="status" value="ALT_INIT"/>
    <property type="molecule type" value="mRNA"/>
</dbReference>
<dbReference type="EMBL" id="AK122470">
    <property type="protein sequence ID" value="BAC65752.1"/>
    <property type="molecule type" value="mRNA"/>
</dbReference>
<dbReference type="FunCoup" id="Q8BQZ4">
    <property type="interactions" value="3109"/>
</dbReference>
<dbReference type="STRING" id="10090.ENSMUSP00000105111"/>
<dbReference type="GlyGen" id="Q8BQZ4">
    <property type="glycosylation" value="3 sites, 1 O-linked glycan (1 site)"/>
</dbReference>
<dbReference type="iPTMnet" id="Q8BQZ4"/>
<dbReference type="PhosphoSitePlus" id="Q8BQZ4"/>
<dbReference type="jPOST" id="Q8BQZ4"/>
<dbReference type="PaxDb" id="10090-ENSMUSP00000105111"/>
<dbReference type="PeptideAtlas" id="Q8BQZ4"/>
<dbReference type="ProteomicsDB" id="299903">
    <molecule id="Q8BQZ4-1"/>
</dbReference>
<dbReference type="ProteomicsDB" id="299904">
    <molecule id="Q8BQZ4-2"/>
</dbReference>
<dbReference type="Pumba" id="Q8BQZ4"/>
<dbReference type="UCSC" id="uc008nqg.1">
    <molecule id="Q8BQZ4-2"/>
    <property type="organism name" value="mouse"/>
</dbReference>
<dbReference type="AGR" id="MGI:2444531"/>
<dbReference type="MGI" id="MGI:2444531">
    <property type="gene designation" value="Ralgapb"/>
</dbReference>
<dbReference type="eggNOG" id="KOG3652">
    <property type="taxonomic scope" value="Eukaryota"/>
</dbReference>
<dbReference type="InParanoid" id="Q8BQZ4"/>
<dbReference type="PhylomeDB" id="Q8BQZ4"/>
<dbReference type="CD-CODE" id="CE726F99">
    <property type="entry name" value="Postsynaptic density"/>
</dbReference>
<dbReference type="ChiTaRS" id="Ralgapb">
    <property type="organism name" value="mouse"/>
</dbReference>
<dbReference type="PRO" id="PR:Q8BQZ4"/>
<dbReference type="Proteomes" id="UP000000589">
    <property type="component" value="Unplaced"/>
</dbReference>
<dbReference type="RNAct" id="Q8BQZ4">
    <property type="molecule type" value="protein"/>
</dbReference>
<dbReference type="GO" id="GO:0005829">
    <property type="term" value="C:cytosol"/>
    <property type="evidence" value="ECO:0000304"/>
    <property type="project" value="Reactome"/>
</dbReference>
<dbReference type="GO" id="GO:0005096">
    <property type="term" value="F:GTPase activator activity"/>
    <property type="evidence" value="ECO:0000316"/>
    <property type="project" value="MGI"/>
</dbReference>
<dbReference type="GO" id="GO:0046982">
    <property type="term" value="F:protein heterodimerization activity"/>
    <property type="evidence" value="ECO:0000250"/>
    <property type="project" value="UniProtKB"/>
</dbReference>
<dbReference type="GO" id="GO:0090630">
    <property type="term" value="P:activation of GTPase activity"/>
    <property type="evidence" value="ECO:0000250"/>
    <property type="project" value="UniProtKB"/>
</dbReference>
<dbReference type="GO" id="GO:0032484">
    <property type="term" value="P:Ral protein signal transduction"/>
    <property type="evidence" value="ECO:0000315"/>
    <property type="project" value="MGI"/>
</dbReference>
<dbReference type="GO" id="GO:0060178">
    <property type="term" value="P:regulation of exocyst localization"/>
    <property type="evidence" value="ECO:0000315"/>
    <property type="project" value="MGI"/>
</dbReference>
<dbReference type="GO" id="GO:0032880">
    <property type="term" value="P:regulation of protein localization"/>
    <property type="evidence" value="ECO:0000315"/>
    <property type="project" value="MGI"/>
</dbReference>
<dbReference type="GO" id="GO:0051056">
    <property type="term" value="P:regulation of small GTPase mediated signal transduction"/>
    <property type="evidence" value="ECO:0007669"/>
    <property type="project" value="InterPro"/>
</dbReference>
<dbReference type="FunFam" id="3.40.50.11210:FF:000005">
    <property type="entry name" value="Ral GTPase-activating protein, beta subunit (non-catalytic)"/>
    <property type="match status" value="1"/>
</dbReference>
<dbReference type="Gene3D" id="3.40.50.11210">
    <property type="entry name" value="Rap/Ran-GAP"/>
    <property type="match status" value="1"/>
</dbReference>
<dbReference type="InterPro" id="IPR039930">
    <property type="entry name" value="RALGAPB"/>
</dbReference>
<dbReference type="InterPro" id="IPR035974">
    <property type="entry name" value="Rap/Ran-GAP_sf"/>
</dbReference>
<dbReference type="InterPro" id="IPR000331">
    <property type="entry name" value="Rap/Ran_GAP_dom"/>
</dbReference>
<dbReference type="InterPro" id="IPR046859">
    <property type="entry name" value="RGPA/RALGAPB_N"/>
</dbReference>
<dbReference type="PANTHER" id="PTHR21344">
    <property type="entry name" value="RAL GTPASE-ACTIVATING PROTEIN SUBUNIT BETA"/>
    <property type="match status" value="1"/>
</dbReference>
<dbReference type="PANTHER" id="PTHR21344:SF1">
    <property type="entry name" value="RAL GTPASE-ACTIVATING PROTEIN SUBUNIT BETA"/>
    <property type="match status" value="1"/>
</dbReference>
<dbReference type="Pfam" id="PF20412">
    <property type="entry name" value="RALGAPB_N"/>
    <property type="match status" value="1"/>
</dbReference>
<dbReference type="SUPFAM" id="SSF111347">
    <property type="entry name" value="Rap/Ran-GAP"/>
    <property type="match status" value="1"/>
</dbReference>
<dbReference type="PROSITE" id="PS50085">
    <property type="entry name" value="RAPGAP"/>
    <property type="match status" value="1"/>
</dbReference>
<feature type="chain" id="PRO_0000056757" description="Ral GTPase-activating protein subunit beta">
    <location>
        <begin position="1"/>
        <end position="1484"/>
    </location>
</feature>
<feature type="domain" description="Rap-GAP" evidence="4">
    <location>
        <begin position="1138"/>
        <end position="1382"/>
    </location>
</feature>
<feature type="region of interest" description="Disordered" evidence="5">
    <location>
        <begin position="355"/>
        <end position="437"/>
    </location>
</feature>
<feature type="region of interest" description="Disordered" evidence="5">
    <location>
        <begin position="699"/>
        <end position="728"/>
    </location>
</feature>
<feature type="region of interest" description="Disordered" evidence="5">
    <location>
        <begin position="1297"/>
        <end position="1325"/>
    </location>
</feature>
<feature type="compositionally biased region" description="Polar residues" evidence="5">
    <location>
        <begin position="369"/>
        <end position="381"/>
    </location>
</feature>
<feature type="compositionally biased region" description="Polar residues" evidence="5">
    <location>
        <begin position="392"/>
        <end position="428"/>
    </location>
</feature>
<feature type="compositionally biased region" description="Polar residues" evidence="5">
    <location>
        <begin position="701"/>
        <end position="725"/>
    </location>
</feature>
<feature type="compositionally biased region" description="Low complexity" evidence="5">
    <location>
        <begin position="1302"/>
        <end position="1313"/>
    </location>
</feature>
<feature type="modified residue" description="Phosphoserine" evidence="3">
    <location>
        <position position="359"/>
    </location>
</feature>
<feature type="modified residue" description="Phosphothreonine" evidence="2">
    <location>
        <position position="363"/>
    </location>
</feature>
<feature type="modified residue" description="Phosphothreonine" evidence="9">
    <location>
        <position position="379"/>
    </location>
</feature>
<feature type="modified residue" description="Phosphoserine" evidence="9">
    <location>
        <position position="421"/>
    </location>
</feature>
<feature type="modified residue" description="Phosphoserine" evidence="3">
    <location>
        <position position="710"/>
    </location>
</feature>
<feature type="modified residue" description="Phosphothreonine" evidence="9">
    <location>
        <position position="724"/>
    </location>
</feature>
<feature type="modified residue" description="Phosphoserine" evidence="3">
    <location>
        <position position="1275"/>
    </location>
</feature>
<feature type="splice variant" id="VSP_009697" description="In isoform 2." evidence="7">
    <original>ASFIQILLSYKSSIATQA</original>
    <variation>GKYAQKHVVIIPFLFLSF</variation>
    <location>
        <begin position="473"/>
        <end position="490"/>
    </location>
</feature>
<feature type="splice variant" id="VSP_009698" description="In isoform 2." evidence="7">
    <location>
        <begin position="491"/>
        <end position="1484"/>
    </location>
</feature>
<feature type="sequence conflict" description="In Ref. 1; BAC33137." evidence="8" ref="1">
    <original>V</original>
    <variation>A</variation>
    <location>
        <position position="1477"/>
    </location>
</feature>
<reference key="1">
    <citation type="journal article" date="2005" name="Science">
        <title>The transcriptional landscape of the mammalian genome.</title>
        <authorList>
            <person name="Carninci P."/>
            <person name="Kasukawa T."/>
            <person name="Katayama S."/>
            <person name="Gough J."/>
            <person name="Frith M.C."/>
            <person name="Maeda N."/>
            <person name="Oyama R."/>
            <person name="Ravasi T."/>
            <person name="Lenhard B."/>
            <person name="Wells C."/>
            <person name="Kodzius R."/>
            <person name="Shimokawa K."/>
            <person name="Bajic V.B."/>
            <person name="Brenner S.E."/>
            <person name="Batalov S."/>
            <person name="Forrest A.R."/>
            <person name="Zavolan M."/>
            <person name="Davis M.J."/>
            <person name="Wilming L.G."/>
            <person name="Aidinis V."/>
            <person name="Allen J.E."/>
            <person name="Ambesi-Impiombato A."/>
            <person name="Apweiler R."/>
            <person name="Aturaliya R.N."/>
            <person name="Bailey T.L."/>
            <person name="Bansal M."/>
            <person name="Baxter L."/>
            <person name="Beisel K.W."/>
            <person name="Bersano T."/>
            <person name="Bono H."/>
            <person name="Chalk A.M."/>
            <person name="Chiu K.P."/>
            <person name="Choudhary V."/>
            <person name="Christoffels A."/>
            <person name="Clutterbuck D.R."/>
            <person name="Crowe M.L."/>
            <person name="Dalla E."/>
            <person name="Dalrymple B.P."/>
            <person name="de Bono B."/>
            <person name="Della Gatta G."/>
            <person name="di Bernardo D."/>
            <person name="Down T."/>
            <person name="Engstrom P."/>
            <person name="Fagiolini M."/>
            <person name="Faulkner G."/>
            <person name="Fletcher C.F."/>
            <person name="Fukushima T."/>
            <person name="Furuno M."/>
            <person name="Futaki S."/>
            <person name="Gariboldi M."/>
            <person name="Georgii-Hemming P."/>
            <person name="Gingeras T.R."/>
            <person name="Gojobori T."/>
            <person name="Green R.E."/>
            <person name="Gustincich S."/>
            <person name="Harbers M."/>
            <person name="Hayashi Y."/>
            <person name="Hensch T.K."/>
            <person name="Hirokawa N."/>
            <person name="Hill D."/>
            <person name="Huminiecki L."/>
            <person name="Iacono M."/>
            <person name="Ikeo K."/>
            <person name="Iwama A."/>
            <person name="Ishikawa T."/>
            <person name="Jakt M."/>
            <person name="Kanapin A."/>
            <person name="Katoh M."/>
            <person name="Kawasawa Y."/>
            <person name="Kelso J."/>
            <person name="Kitamura H."/>
            <person name="Kitano H."/>
            <person name="Kollias G."/>
            <person name="Krishnan S.P."/>
            <person name="Kruger A."/>
            <person name="Kummerfeld S.K."/>
            <person name="Kurochkin I.V."/>
            <person name="Lareau L.F."/>
            <person name="Lazarevic D."/>
            <person name="Lipovich L."/>
            <person name="Liu J."/>
            <person name="Liuni S."/>
            <person name="McWilliam S."/>
            <person name="Madan Babu M."/>
            <person name="Madera M."/>
            <person name="Marchionni L."/>
            <person name="Matsuda H."/>
            <person name="Matsuzawa S."/>
            <person name="Miki H."/>
            <person name="Mignone F."/>
            <person name="Miyake S."/>
            <person name="Morris K."/>
            <person name="Mottagui-Tabar S."/>
            <person name="Mulder N."/>
            <person name="Nakano N."/>
            <person name="Nakauchi H."/>
            <person name="Ng P."/>
            <person name="Nilsson R."/>
            <person name="Nishiguchi S."/>
            <person name="Nishikawa S."/>
            <person name="Nori F."/>
            <person name="Ohara O."/>
            <person name="Okazaki Y."/>
            <person name="Orlando V."/>
            <person name="Pang K.C."/>
            <person name="Pavan W.J."/>
            <person name="Pavesi G."/>
            <person name="Pesole G."/>
            <person name="Petrovsky N."/>
            <person name="Piazza S."/>
            <person name="Reed J."/>
            <person name="Reid J.F."/>
            <person name="Ring B.Z."/>
            <person name="Ringwald M."/>
            <person name="Rost B."/>
            <person name="Ruan Y."/>
            <person name="Salzberg S.L."/>
            <person name="Sandelin A."/>
            <person name="Schneider C."/>
            <person name="Schoenbach C."/>
            <person name="Sekiguchi K."/>
            <person name="Semple C.A."/>
            <person name="Seno S."/>
            <person name="Sessa L."/>
            <person name="Sheng Y."/>
            <person name="Shibata Y."/>
            <person name="Shimada H."/>
            <person name="Shimada K."/>
            <person name="Silva D."/>
            <person name="Sinclair B."/>
            <person name="Sperling S."/>
            <person name="Stupka E."/>
            <person name="Sugiura K."/>
            <person name="Sultana R."/>
            <person name="Takenaka Y."/>
            <person name="Taki K."/>
            <person name="Tammoja K."/>
            <person name="Tan S.L."/>
            <person name="Tang S."/>
            <person name="Taylor M.S."/>
            <person name="Tegner J."/>
            <person name="Teichmann S.A."/>
            <person name="Ueda H.R."/>
            <person name="van Nimwegen E."/>
            <person name="Verardo R."/>
            <person name="Wei C.L."/>
            <person name="Yagi K."/>
            <person name="Yamanishi H."/>
            <person name="Zabarovsky E."/>
            <person name="Zhu S."/>
            <person name="Zimmer A."/>
            <person name="Hide W."/>
            <person name="Bult C."/>
            <person name="Grimmond S.M."/>
            <person name="Teasdale R.D."/>
            <person name="Liu E.T."/>
            <person name="Brusic V."/>
            <person name="Quackenbush J."/>
            <person name="Wahlestedt C."/>
            <person name="Mattick J.S."/>
            <person name="Hume D.A."/>
            <person name="Kai C."/>
            <person name="Sasaki D."/>
            <person name="Tomaru Y."/>
            <person name="Fukuda S."/>
            <person name="Kanamori-Katayama M."/>
            <person name="Suzuki M."/>
            <person name="Aoki J."/>
            <person name="Arakawa T."/>
            <person name="Iida J."/>
            <person name="Imamura K."/>
            <person name="Itoh M."/>
            <person name="Kato T."/>
            <person name="Kawaji H."/>
            <person name="Kawagashira N."/>
            <person name="Kawashima T."/>
            <person name="Kojima M."/>
            <person name="Kondo S."/>
            <person name="Konno H."/>
            <person name="Nakano K."/>
            <person name="Ninomiya N."/>
            <person name="Nishio T."/>
            <person name="Okada M."/>
            <person name="Plessy C."/>
            <person name="Shibata K."/>
            <person name="Shiraki T."/>
            <person name="Suzuki S."/>
            <person name="Tagami M."/>
            <person name="Waki K."/>
            <person name="Watahiki A."/>
            <person name="Okamura-Oho Y."/>
            <person name="Suzuki H."/>
            <person name="Kawai J."/>
            <person name="Hayashizaki Y."/>
        </authorList>
    </citation>
    <scope>NUCLEOTIDE SEQUENCE [LARGE SCALE MRNA] (ISOFORM 2)</scope>
    <scope>NUCLEOTIDE SEQUENCE [LARGE SCALE MRNA] OF 1225-1484 (ISOFORM 1)</scope>
    <source>
        <strain>C57BL/6J</strain>
        <tissue>Brain</tissue>
        <tissue>Corpus striatum</tissue>
    </source>
</reference>
<reference key="2">
    <citation type="journal article" date="2003" name="DNA Res.">
        <title>Prediction of the coding sequences of mouse homologues of KIAA gene: II. The complete nucleotide sequences of 400 mouse KIAA-homologous cDNAs identified by screening of terminal sequences of cDNA clones randomly sampled from size-fractionated libraries.</title>
        <authorList>
            <person name="Okazaki N."/>
            <person name="Kikuno R."/>
            <person name="Ohara R."/>
            <person name="Inamoto S."/>
            <person name="Aizawa H."/>
            <person name="Yuasa S."/>
            <person name="Nakajima D."/>
            <person name="Nagase T."/>
            <person name="Ohara O."/>
            <person name="Koga H."/>
        </authorList>
    </citation>
    <scope>NUCLEOTIDE SEQUENCE [LARGE SCALE MRNA] OF 313-1484 (ISOFORM 1)</scope>
    <source>
        <tissue>Brain</tissue>
    </source>
</reference>
<reference key="3">
    <citation type="journal article" date="2006" name="Cell. Signal.">
        <title>Adipocytes contain a novel complex similar to the tuberous sclerosis complex.</title>
        <authorList>
            <person name="Gridley S."/>
            <person name="Chavez J.A."/>
            <person name="Lane W.S."/>
            <person name="Lienhard G.E."/>
        </authorList>
    </citation>
    <scope>INTERACTION WITH RALGAPA2</scope>
    <scope>TISSUE SPECIFICITY</scope>
</reference>
<reference key="4">
    <citation type="journal article" date="2010" name="Cell">
        <title>A tissue-specific atlas of mouse protein phosphorylation and expression.</title>
        <authorList>
            <person name="Huttlin E.L."/>
            <person name="Jedrychowski M.P."/>
            <person name="Elias J.E."/>
            <person name="Goswami T."/>
            <person name="Rad R."/>
            <person name="Beausoleil S.A."/>
            <person name="Villen J."/>
            <person name="Haas W."/>
            <person name="Sowa M.E."/>
            <person name="Gygi S.P."/>
        </authorList>
    </citation>
    <scope>PHOSPHORYLATION [LARGE SCALE ANALYSIS] AT THR-379; SER-421 AND THR-724</scope>
    <scope>IDENTIFICATION BY MASS SPECTROMETRY [LARGE SCALE ANALYSIS]</scope>
    <source>
        <tissue>Brain</tissue>
        <tissue>Brown adipose tissue</tissue>
        <tissue>Heart</tissue>
        <tissue>Kidney</tissue>
        <tissue>Lung</tissue>
        <tissue>Pancreas</tissue>
        <tissue>Spleen</tissue>
        <tissue>Testis</tissue>
    </source>
</reference>
<comment type="function">
    <text evidence="1">Non-catalytic subunit of the heterodimeric RalGAP1 and RalGAP2 complexes which act as GTPase activators for the Ras-like small GTPases RALA and RALB.</text>
</comment>
<comment type="subunit">
    <text evidence="1">Component of the heterodimeric RalGAP1 complex with RALGAPA1 and of the heterodimeric RalGAP2 complex with RALGAPA2. Heterodimerization is required for activity (By similarity).</text>
</comment>
<comment type="alternative products">
    <event type="alternative splicing"/>
    <isoform>
        <id>Q8BQZ4-1</id>
        <name>1</name>
        <sequence type="displayed"/>
    </isoform>
    <isoform>
        <id>Q8BQZ4-2</id>
        <name>2</name>
        <sequence type="described" ref="VSP_009697 VSP_009698"/>
    </isoform>
</comment>
<comment type="tissue specificity">
    <text evidence="6">Abundantly expressed in testis, pancreas, lung, thymus, brown fat, and white fat. Expressed at lower levels in the brain.</text>
</comment>
<comment type="miscellaneous">
    <molecule>Isoform 2</molecule>
    <text evidence="8">May be due to intron retention.</text>
</comment>
<comment type="sequence caution" evidence="8">
    <conflict type="erroneous initiation">
        <sequence resource="EMBL-CDS" id="BAC33137"/>
    </conflict>
</comment>
<organism>
    <name type="scientific">Mus musculus</name>
    <name type="common">Mouse</name>
    <dbReference type="NCBI Taxonomy" id="10090"/>
    <lineage>
        <taxon>Eukaryota</taxon>
        <taxon>Metazoa</taxon>
        <taxon>Chordata</taxon>
        <taxon>Craniata</taxon>
        <taxon>Vertebrata</taxon>
        <taxon>Euteleostomi</taxon>
        <taxon>Mammalia</taxon>
        <taxon>Eutheria</taxon>
        <taxon>Euarchontoglires</taxon>
        <taxon>Glires</taxon>
        <taxon>Rodentia</taxon>
        <taxon>Myomorpha</taxon>
        <taxon>Muroidea</taxon>
        <taxon>Muridae</taxon>
        <taxon>Murinae</taxon>
        <taxon>Mus</taxon>
        <taxon>Mus</taxon>
    </lineage>
</organism>
<accession>Q8BQZ4</accession>
<accession>Q80TH5</accession>
<accession>Q8BQN1</accession>
<protein>
    <recommendedName>
        <fullName>Ral GTPase-activating protein subunit beta</fullName>
    </recommendedName>
    <alternativeName>
        <fullName>p170</fullName>
    </alternativeName>
</protein>
<name>RLGPB_MOUSE</name>
<evidence type="ECO:0000250" key="1"/>
<evidence type="ECO:0000250" key="2">
    <source>
        <dbReference type="UniProtKB" id="P86410"/>
    </source>
</evidence>
<evidence type="ECO:0000250" key="3">
    <source>
        <dbReference type="UniProtKB" id="Q86X10"/>
    </source>
</evidence>
<evidence type="ECO:0000255" key="4">
    <source>
        <dbReference type="PROSITE-ProRule" id="PRU00165"/>
    </source>
</evidence>
<evidence type="ECO:0000256" key="5">
    <source>
        <dbReference type="SAM" id="MobiDB-lite"/>
    </source>
</evidence>
<evidence type="ECO:0000269" key="6">
    <source>
    </source>
</evidence>
<evidence type="ECO:0000303" key="7">
    <source>
    </source>
</evidence>
<evidence type="ECO:0000305" key="8"/>
<evidence type="ECO:0007744" key="9">
    <source>
    </source>
</evidence>
<gene>
    <name type="primary">Ralgapb</name>
    <name type="synonym">Kiaa1219</name>
</gene>